<accession>Q67VS5</accession>
<accession>Q0DAU3</accession>
<accession>Q8VXB3</accession>
<accession>Q8VXB9</accession>
<comment type="function">
    <text evidence="3">High-affinity potassium transporter.</text>
</comment>
<comment type="subcellular location">
    <subcellularLocation>
        <location evidence="3">Vacuole membrane</location>
        <topology evidence="3">Multi-pass membrane protein</topology>
    </subcellularLocation>
    <text>May localize to tonoplast.</text>
</comment>
<comment type="tissue specificity">
    <text evidence="3">Expressed in roots, shoots, and panicle at flowering stage.</text>
</comment>
<comment type="similarity">
    <text evidence="4">Belongs to the HAK/KUP transporter (TC 2.A.72.3) family.</text>
</comment>
<sequence length="843" mass="91974">MKSPSPVDPESPSSPDCKGGSSSKRRRLPWRMTMSLAYQSLGVVYGDLSTSPLYVYKAAFAEDIQHSETNEEILGVLSFVFWTLTLVPLLKYVCVVLRADDNGEGGTFALYSLLCRHARAALLPPGGGGGGGEPGDEDQFLDAGADKKAAANGNALALSGRGGGGGAAAGVRRLLERHKVLQRVLLVLALVGTCMVIGDGVLTPAISVFSAVSGLELSMEKHQHKYVEVPIACFVLVCLFCLQHYGTHRVGFLFAPIVITWLLCISMIGVYNIVHWEPNVYRALSPYYMYKFLKKTQRGGWMSLGGILLCITGSEAMFADLGHFNQLSIQIAFTCMVYPSLILAYMGQAAYLCKHHIIESDYRIGFYVSVPEKIRWPVLAIAILAAVVGSQAVITGTFSMIKQCTALGCFPRVKIVHTSDKVHGQIYIPEINWILMILCLAITIGFRDTKHLGNASGLAVITVMLVTTCLMSLVIVLCWHKSIFLAFGFIIFFGTIEALYFSASLIKFREGAWVPIVLAFIFMAIMCIWHYGTIKKYEFDLQNKVSINWLLGLSPNLGIVRVRGIGLIHTELDSGIPAIFSHFVTNLPAFHQVLIFLCIKNVPIPHVSPEERFLVGRIGPKEYRIYRCIVRYGYHDVHKDDQEFEKELVCSVAEFIRSGAAAAADAAASSKPKNVCGGGAEESEKEEEERMSVIPSGSIRMMEEDGGAGAPSSEDTVGGSGSGSGRGSSRGGGGAREIMSPSPSPPPVVVAPRKRVRFVLPAASPRPDAGVREELQELMDAREAGMAFILGHSYVKAKSGSSFFRRLVINFCYDFLRRNSRGPNYAVTIPHASTLEVGMIYYV</sequence>
<dbReference type="EMBL" id="AJ427972">
    <property type="protein sequence ID" value="CAD20993.1"/>
    <property type="molecule type" value="mRNA"/>
</dbReference>
<dbReference type="EMBL" id="AJ427979">
    <property type="protein sequence ID" value="CAD21000.1"/>
    <property type="molecule type" value="Genomic_DNA"/>
</dbReference>
<dbReference type="EMBL" id="AP004737">
    <property type="protein sequence ID" value="BAD37744.1"/>
    <property type="molecule type" value="Genomic_DNA"/>
</dbReference>
<dbReference type="EMBL" id="AP008212">
    <property type="protein sequence ID" value="BAF20030.1"/>
    <property type="molecule type" value="Genomic_DNA"/>
</dbReference>
<dbReference type="EMBL" id="AP014962">
    <property type="status" value="NOT_ANNOTATED_CDS"/>
    <property type="molecule type" value="Genomic_DNA"/>
</dbReference>
<dbReference type="RefSeq" id="XP_015643704.1">
    <property type="nucleotide sequence ID" value="XM_015788218.1"/>
</dbReference>
<dbReference type="FunCoup" id="Q67VS5">
    <property type="interactions" value="59"/>
</dbReference>
<dbReference type="STRING" id="39947.Q67VS5"/>
<dbReference type="iPTMnet" id="Q67VS5"/>
<dbReference type="PaxDb" id="39947-Q67VS5"/>
<dbReference type="EnsemblPlants" id="Os06t0625900-01">
    <property type="protein sequence ID" value="Os06t0625900-01"/>
    <property type="gene ID" value="Os06g0625900"/>
</dbReference>
<dbReference type="Gramene" id="Os06t0625900-01">
    <property type="protein sequence ID" value="Os06t0625900-01"/>
    <property type="gene ID" value="Os06g0625900"/>
</dbReference>
<dbReference type="KEGG" id="dosa:Os06g0625900"/>
<dbReference type="eggNOG" id="ENOG502QPSA">
    <property type="taxonomic scope" value="Eukaryota"/>
</dbReference>
<dbReference type="HOGENOM" id="CLU_008142_2_1_1"/>
<dbReference type="InParanoid" id="Q67VS5"/>
<dbReference type="OrthoDB" id="504708at2759"/>
<dbReference type="BioCyc" id="MetaCyc:MONOMER-14580"/>
<dbReference type="Proteomes" id="UP000000763">
    <property type="component" value="Chromosome 6"/>
</dbReference>
<dbReference type="Proteomes" id="UP000059680">
    <property type="component" value="Chromosome 6"/>
</dbReference>
<dbReference type="GO" id="GO:0016020">
    <property type="term" value="C:membrane"/>
    <property type="evidence" value="ECO:0000318"/>
    <property type="project" value="GO_Central"/>
</dbReference>
<dbReference type="GO" id="GO:0005774">
    <property type="term" value="C:vacuolar membrane"/>
    <property type="evidence" value="ECO:0007669"/>
    <property type="project" value="UniProtKB-SubCell"/>
</dbReference>
<dbReference type="GO" id="GO:0015079">
    <property type="term" value="F:potassium ion transmembrane transporter activity"/>
    <property type="evidence" value="ECO:0000318"/>
    <property type="project" value="GO_Central"/>
</dbReference>
<dbReference type="GO" id="GO:0006813">
    <property type="term" value="P:potassium ion transport"/>
    <property type="evidence" value="ECO:0000318"/>
    <property type="project" value="GO_Central"/>
</dbReference>
<dbReference type="InterPro" id="IPR003855">
    <property type="entry name" value="K+_transporter"/>
</dbReference>
<dbReference type="InterPro" id="IPR053952">
    <property type="entry name" value="K_trans_C"/>
</dbReference>
<dbReference type="InterPro" id="IPR053951">
    <property type="entry name" value="K_trans_N"/>
</dbReference>
<dbReference type="NCBIfam" id="TIGR00794">
    <property type="entry name" value="kup"/>
    <property type="match status" value="1"/>
</dbReference>
<dbReference type="PANTHER" id="PTHR30540">
    <property type="entry name" value="OSMOTIC STRESS POTASSIUM TRANSPORTER"/>
    <property type="match status" value="1"/>
</dbReference>
<dbReference type="PANTHER" id="PTHR30540:SF10">
    <property type="entry name" value="POTASSIUM TRANSPORTER 8"/>
    <property type="match status" value="1"/>
</dbReference>
<dbReference type="Pfam" id="PF02705">
    <property type="entry name" value="K_trans"/>
    <property type="match status" value="1"/>
</dbReference>
<dbReference type="Pfam" id="PF22776">
    <property type="entry name" value="K_trans_C"/>
    <property type="match status" value="1"/>
</dbReference>
<evidence type="ECO:0000255" key="1"/>
<evidence type="ECO:0000256" key="2">
    <source>
        <dbReference type="SAM" id="MobiDB-lite"/>
    </source>
</evidence>
<evidence type="ECO:0000269" key="3">
    <source>
    </source>
</evidence>
<evidence type="ECO:0000305" key="4"/>
<feature type="chain" id="PRO_0000209097" description="Potassium transporter 10">
    <location>
        <begin position="1"/>
        <end position="843"/>
    </location>
</feature>
<feature type="topological domain" description="Cytoplasmic" evidence="1">
    <location>
        <begin position="1"/>
        <end position="34"/>
    </location>
</feature>
<feature type="transmembrane region" description="Helical; Name=1" evidence="1">
    <location>
        <begin position="35"/>
        <end position="55"/>
    </location>
</feature>
<feature type="topological domain" description="Vacuolar" evidence="1">
    <location>
        <begin position="56"/>
        <end position="72"/>
    </location>
</feature>
<feature type="transmembrane region" description="Helical; Name=2" evidence="1">
    <location>
        <begin position="73"/>
        <end position="93"/>
    </location>
</feature>
<feature type="topological domain" description="Cytoplasmic" evidence="1">
    <location>
        <begin position="94"/>
        <end position="183"/>
    </location>
</feature>
<feature type="transmembrane region" description="Helical; Name=3" evidence="1">
    <location>
        <begin position="184"/>
        <end position="204"/>
    </location>
</feature>
<feature type="topological domain" description="Vacuolar" evidence="1">
    <location>
        <begin position="205"/>
        <end position="225"/>
    </location>
</feature>
<feature type="transmembrane region" description="Helical; Name=4" evidence="1">
    <location>
        <begin position="226"/>
        <end position="246"/>
    </location>
</feature>
<feature type="topological domain" description="Cytoplasmic" evidence="1">
    <location>
        <begin position="247"/>
        <end position="249"/>
    </location>
</feature>
<feature type="transmembrane region" description="Helical; Name=5" evidence="1">
    <location>
        <begin position="250"/>
        <end position="270"/>
    </location>
</feature>
<feature type="topological domain" description="Vacuolar" evidence="1">
    <location>
        <begin position="271"/>
        <end position="298"/>
    </location>
</feature>
<feature type="transmembrane region" description="Helical; Name=6" evidence="1">
    <location>
        <begin position="299"/>
        <end position="319"/>
    </location>
</feature>
<feature type="topological domain" description="Cytoplasmic" evidence="1">
    <location>
        <begin position="320"/>
        <end position="326"/>
    </location>
</feature>
<feature type="transmembrane region" description="Helical; Name=7" evidence="1">
    <location>
        <begin position="327"/>
        <end position="347"/>
    </location>
</feature>
<feature type="topological domain" description="Vacuolar" evidence="1">
    <location>
        <begin position="348"/>
        <end position="377"/>
    </location>
</feature>
<feature type="transmembrane region" description="Helical; Name=7" evidence="1">
    <location>
        <begin position="378"/>
        <end position="398"/>
    </location>
</feature>
<feature type="topological domain" description="Cytoplasmic" evidence="1">
    <location>
        <begin position="399"/>
        <end position="425"/>
    </location>
</feature>
<feature type="transmembrane region" description="Helical; Name=9" evidence="1">
    <location>
        <begin position="426"/>
        <end position="446"/>
    </location>
</feature>
<feature type="topological domain" description="Vacuolar" evidence="1">
    <location>
        <begin position="447"/>
        <end position="451"/>
    </location>
</feature>
<feature type="transmembrane region" description="Helical; Name=10" evidence="1">
    <location>
        <begin position="452"/>
        <end position="472"/>
    </location>
</feature>
<feature type="topological domain" description="Cytoplasmic" evidence="1">
    <location>
        <begin position="473"/>
        <end position="482"/>
    </location>
</feature>
<feature type="transmembrane region" description="Helical; Name=11" evidence="1">
    <location>
        <begin position="483"/>
        <end position="505"/>
    </location>
</feature>
<feature type="topological domain" description="Vacuolar" evidence="1">
    <location>
        <begin position="506"/>
        <end position="510"/>
    </location>
</feature>
<feature type="transmembrane region" description="Helical; Name=12" evidence="1">
    <location>
        <begin position="511"/>
        <end position="531"/>
    </location>
</feature>
<feature type="topological domain" description="Cytoplasmic" evidence="1">
    <location>
        <begin position="532"/>
        <end position="843"/>
    </location>
</feature>
<feature type="region of interest" description="Disordered" evidence="2">
    <location>
        <begin position="1"/>
        <end position="25"/>
    </location>
</feature>
<feature type="region of interest" description="Disordered" evidence="2">
    <location>
        <begin position="667"/>
        <end position="747"/>
    </location>
</feature>
<feature type="compositionally biased region" description="Low complexity" evidence="2">
    <location>
        <begin position="1"/>
        <end position="15"/>
    </location>
</feature>
<feature type="compositionally biased region" description="Gly residues" evidence="2">
    <location>
        <begin position="718"/>
        <end position="735"/>
    </location>
</feature>
<feature type="sequence conflict" description="In Ref. 1; CAD21000." evidence="4" ref="1">
    <original>A</original>
    <variation>P</variation>
    <location>
        <position position="58"/>
    </location>
</feature>
<feature type="sequence conflict" description="In Ref. 1; CAD21000." evidence="4" ref="1">
    <original>E</original>
    <variation>K</variation>
    <location>
        <position position="137"/>
    </location>
</feature>
<feature type="sequence conflict" description="In Ref. 1; CAD21000." evidence="4" ref="1">
    <original>G</original>
    <variation>A</variation>
    <location>
        <position position="162"/>
    </location>
</feature>
<feature type="sequence conflict" description="In Ref. 1; CAD21000." evidence="4" ref="1">
    <original>S</original>
    <variation>F</variation>
    <location>
        <position position="670"/>
    </location>
</feature>
<protein>
    <recommendedName>
        <fullName>Potassium transporter 10</fullName>
    </recommendedName>
    <alternativeName>
        <fullName>OsHAK10</fullName>
    </alternativeName>
</protein>
<keyword id="KW-0406">Ion transport</keyword>
<keyword id="KW-0472">Membrane</keyword>
<keyword id="KW-0630">Potassium</keyword>
<keyword id="KW-0633">Potassium transport</keyword>
<keyword id="KW-1185">Reference proteome</keyword>
<keyword id="KW-0812">Transmembrane</keyword>
<keyword id="KW-1133">Transmembrane helix</keyword>
<keyword id="KW-0813">Transport</keyword>
<keyword id="KW-0926">Vacuole</keyword>
<gene>
    <name type="primary">HAK10</name>
    <name type="ordered locus">Os06g0625900</name>
    <name type="ordered locus">LOC_Os06g42030</name>
    <name type="ORF">OSJNBa0072A21.17</name>
</gene>
<organism>
    <name type="scientific">Oryza sativa subsp. japonica</name>
    <name type="common">Rice</name>
    <dbReference type="NCBI Taxonomy" id="39947"/>
    <lineage>
        <taxon>Eukaryota</taxon>
        <taxon>Viridiplantae</taxon>
        <taxon>Streptophyta</taxon>
        <taxon>Embryophyta</taxon>
        <taxon>Tracheophyta</taxon>
        <taxon>Spermatophyta</taxon>
        <taxon>Magnoliopsida</taxon>
        <taxon>Liliopsida</taxon>
        <taxon>Poales</taxon>
        <taxon>Poaceae</taxon>
        <taxon>BOP clade</taxon>
        <taxon>Oryzoideae</taxon>
        <taxon>Oryzeae</taxon>
        <taxon>Oryzinae</taxon>
        <taxon>Oryza</taxon>
        <taxon>Oryza sativa</taxon>
    </lineage>
</organism>
<proteinExistence type="evidence at transcript level"/>
<reference key="1">
    <citation type="journal article" date="2002" name="Plant Physiol.">
        <title>Inventory and functional characterization of the HAK potassium transporters of rice.</title>
        <authorList>
            <person name="Banuelos M.A."/>
            <person name="Garciadeblas B."/>
            <person name="Cubero B."/>
            <person name="Rodriguez-Navarro A."/>
        </authorList>
    </citation>
    <scope>NUCLEOTIDE SEQUENCE [GENOMIC DNA / MRNA]</scope>
    <scope>FUNCTION</scope>
    <scope>SUBCELLULAR LOCATION</scope>
    <scope>NOMENCLATURE</scope>
    <scope>TISSUE SPECIFICITY</scope>
    <source>
        <strain>cv. Nipponbare</strain>
    </source>
</reference>
<reference key="2">
    <citation type="journal article" date="2005" name="Nature">
        <title>The map-based sequence of the rice genome.</title>
        <authorList>
            <consortium name="International rice genome sequencing project (IRGSP)"/>
        </authorList>
    </citation>
    <scope>NUCLEOTIDE SEQUENCE [LARGE SCALE GENOMIC DNA]</scope>
    <source>
        <strain>cv. Nipponbare</strain>
    </source>
</reference>
<reference key="3">
    <citation type="journal article" date="2008" name="Nucleic Acids Res.">
        <title>The rice annotation project database (RAP-DB): 2008 update.</title>
        <authorList>
            <consortium name="The rice annotation project (RAP)"/>
        </authorList>
    </citation>
    <scope>GENOME REANNOTATION</scope>
    <source>
        <strain>cv. Nipponbare</strain>
    </source>
</reference>
<reference key="4">
    <citation type="journal article" date="2013" name="Rice">
        <title>Improvement of the Oryza sativa Nipponbare reference genome using next generation sequence and optical map data.</title>
        <authorList>
            <person name="Kawahara Y."/>
            <person name="de la Bastide M."/>
            <person name="Hamilton J.P."/>
            <person name="Kanamori H."/>
            <person name="McCombie W.R."/>
            <person name="Ouyang S."/>
            <person name="Schwartz D.C."/>
            <person name="Tanaka T."/>
            <person name="Wu J."/>
            <person name="Zhou S."/>
            <person name="Childs K.L."/>
            <person name="Davidson R.M."/>
            <person name="Lin H."/>
            <person name="Quesada-Ocampo L."/>
            <person name="Vaillancourt B."/>
            <person name="Sakai H."/>
            <person name="Lee S.S."/>
            <person name="Kim J."/>
            <person name="Numa H."/>
            <person name="Itoh T."/>
            <person name="Buell C.R."/>
            <person name="Matsumoto T."/>
        </authorList>
    </citation>
    <scope>GENOME REANNOTATION</scope>
    <source>
        <strain>cv. Nipponbare</strain>
    </source>
</reference>
<reference key="5">
    <citation type="journal article" date="2009" name="J. Genet. Genomics">
        <title>Molecular evolution and functional divergence of HAK potassium transporter gene family in rice (Oryza sativa L.).</title>
        <authorList>
            <person name="Yang Z."/>
            <person name="Gao Q."/>
            <person name="Sun C."/>
            <person name="Li W."/>
            <person name="Gu S."/>
            <person name="Xu C."/>
        </authorList>
    </citation>
    <scope>GENE FAMILY</scope>
</reference>
<name>HAK10_ORYSJ</name>